<dbReference type="EMBL" id="AK097617">
    <property type="protein sequence ID" value="BAC05122.1"/>
    <property type="molecule type" value="mRNA"/>
</dbReference>
<dbReference type="EMBL" id="AC108929">
    <property type="status" value="NOT_ANNOTATED_CDS"/>
    <property type="molecule type" value="Genomic_DNA"/>
</dbReference>
<dbReference type="EMBL" id="CH471053">
    <property type="protein sequence ID" value="EAX00150.1"/>
    <property type="molecule type" value="Genomic_DNA"/>
</dbReference>
<dbReference type="EMBL" id="BC031669">
    <property type="protein sequence ID" value="AAH31669.1"/>
    <property type="status" value="ALT_INIT"/>
    <property type="molecule type" value="mRNA"/>
</dbReference>
<dbReference type="EMBL" id="BC126244">
    <property type="protein sequence ID" value="AAI26245.1"/>
    <property type="molecule type" value="mRNA"/>
</dbReference>
<dbReference type="EMBL" id="BC126246">
    <property type="protein sequence ID" value="AAI26247.1"/>
    <property type="molecule type" value="mRNA"/>
</dbReference>
<dbReference type="CCDS" id="CCDS46285.1">
    <molecule id="Q8N5S3-1"/>
</dbReference>
<dbReference type="RefSeq" id="NP_001093866.1">
    <molecule id="Q8N5S3-1"/>
    <property type="nucleotide sequence ID" value="NM_001100396.2"/>
</dbReference>
<dbReference type="RefSeq" id="NP_001356332.1">
    <molecule id="Q8N5S3-2"/>
    <property type="nucleotide sequence ID" value="NM_001369403.1"/>
</dbReference>
<dbReference type="RefSeq" id="XP_005264190.1">
    <property type="nucleotide sequence ID" value="XM_005264133.1"/>
</dbReference>
<dbReference type="RefSeq" id="XP_005264191.1">
    <property type="nucleotide sequence ID" value="XM_005264134.3"/>
</dbReference>
<dbReference type="RefSeq" id="XP_011530812.1">
    <property type="nucleotide sequence ID" value="XM_011532510.2"/>
</dbReference>
<dbReference type="RefSeq" id="XP_011530815.1">
    <property type="nucleotide sequence ID" value="XM_011532513.2"/>
</dbReference>
<dbReference type="BioGRID" id="126212">
    <property type="interactions" value="26"/>
</dbReference>
<dbReference type="FunCoup" id="Q8N5S3">
    <property type="interactions" value="15"/>
</dbReference>
<dbReference type="IntAct" id="Q8N5S3">
    <property type="interactions" value="20"/>
</dbReference>
<dbReference type="STRING" id="9606.ENSP00000381631"/>
<dbReference type="PhosphoSitePlus" id="Q8N5S3"/>
<dbReference type="BioMuta" id="C2orf73"/>
<dbReference type="jPOST" id="Q8N5S3"/>
<dbReference type="MassIVE" id="Q8N5S3"/>
<dbReference type="PaxDb" id="9606-ENSP00000381631"/>
<dbReference type="PeptideAtlas" id="Q8N5S3"/>
<dbReference type="ProteomicsDB" id="72090">
    <molecule id="Q8N5S3-1"/>
</dbReference>
<dbReference type="ProteomicsDB" id="72091">
    <molecule id="Q8N5S3-2"/>
</dbReference>
<dbReference type="Antibodypedia" id="66471">
    <property type="antibodies" value="10 antibodies from 6 providers"/>
</dbReference>
<dbReference type="DNASU" id="129852"/>
<dbReference type="Ensembl" id="ENST00000398634.7">
    <molecule id="Q8N5S3-1"/>
    <property type="protein sequence ID" value="ENSP00000381631.2"/>
    <property type="gene ID" value="ENSG00000177994.16"/>
</dbReference>
<dbReference type="GeneID" id="129852"/>
<dbReference type="KEGG" id="hsa:129852"/>
<dbReference type="MANE-Select" id="ENST00000398634.7">
    <property type="protein sequence ID" value="ENSP00000381631.2"/>
    <property type="RefSeq nucleotide sequence ID" value="NM_001100396.2"/>
    <property type="RefSeq protein sequence ID" value="NP_001093866.1"/>
</dbReference>
<dbReference type="UCSC" id="uc002rxt.1">
    <molecule id="Q8N5S3-1"/>
    <property type="organism name" value="human"/>
</dbReference>
<dbReference type="AGR" id="HGNC:26861"/>
<dbReference type="CTD" id="129852"/>
<dbReference type="DisGeNET" id="129852"/>
<dbReference type="GeneCards" id="CIMIP6"/>
<dbReference type="HGNC" id="HGNC:26861">
    <property type="gene designation" value="CIMIP6"/>
</dbReference>
<dbReference type="HPA" id="ENSG00000177994">
    <property type="expression patterns" value="Tissue enriched (testis)"/>
</dbReference>
<dbReference type="neXtProt" id="NX_Q8N5S3"/>
<dbReference type="OpenTargets" id="ENSG00000177994"/>
<dbReference type="PharmGKB" id="PA162379532"/>
<dbReference type="VEuPathDB" id="HostDB:ENSG00000177994"/>
<dbReference type="eggNOG" id="ENOG502S2FJ">
    <property type="taxonomic scope" value="Eukaryota"/>
</dbReference>
<dbReference type="GeneTree" id="ENSGT00390000005045"/>
<dbReference type="InParanoid" id="Q8N5S3"/>
<dbReference type="OMA" id="RNDFQKP"/>
<dbReference type="OrthoDB" id="9971371at2759"/>
<dbReference type="PAN-GO" id="Q8N5S3">
    <property type="GO annotations" value="0 GO annotations based on evolutionary models"/>
</dbReference>
<dbReference type="PhylomeDB" id="Q8N5S3"/>
<dbReference type="TreeFam" id="TF337686"/>
<dbReference type="PathwayCommons" id="Q8N5S3"/>
<dbReference type="SignaLink" id="Q8N5S3"/>
<dbReference type="BioGRID-ORCS" id="129852">
    <property type="hits" value="10 hits in 1127 CRISPR screens"/>
</dbReference>
<dbReference type="GenomeRNAi" id="129852"/>
<dbReference type="Pharos" id="Q8N5S3">
    <property type="development level" value="Tdark"/>
</dbReference>
<dbReference type="PRO" id="PR:Q8N5S3"/>
<dbReference type="Proteomes" id="UP000005640">
    <property type="component" value="Chromosome 2"/>
</dbReference>
<dbReference type="RNAct" id="Q8N5S3">
    <property type="molecule type" value="protein"/>
</dbReference>
<dbReference type="Bgee" id="ENSG00000177994">
    <property type="expression patterns" value="Expressed in left testis and 103 other cell types or tissues"/>
</dbReference>
<dbReference type="ExpressionAtlas" id="Q8N5S3">
    <property type="expression patterns" value="baseline and differential"/>
</dbReference>
<dbReference type="GO" id="GO:0005929">
    <property type="term" value="C:cilium"/>
    <property type="evidence" value="ECO:0007669"/>
    <property type="project" value="UniProtKB-SubCell"/>
</dbReference>
<dbReference type="InterPro" id="IPR031365">
    <property type="entry name" value="CMIP6"/>
</dbReference>
<dbReference type="PANTHER" id="PTHR35087:SF1">
    <property type="entry name" value="RIKEN CDNA 4930505A04 GENE"/>
    <property type="match status" value="1"/>
</dbReference>
<dbReference type="PANTHER" id="PTHR35087">
    <property type="entry name" value="SIMILAR TO HYPOTHETICAL PROTEIN FLJ40298"/>
    <property type="match status" value="1"/>
</dbReference>
<dbReference type="Pfam" id="PF15667">
    <property type="entry name" value="CMIP6"/>
    <property type="match status" value="1"/>
</dbReference>
<gene>
    <name evidence="9" type="primary">CIMIP6</name>
    <name type="synonym">C2orf73</name>
</gene>
<name>CMIP6_HUMAN</name>
<feature type="chain" id="PRO_0000332213" description="Ciliary microtubule inner protein 6">
    <location>
        <begin position="1"/>
        <end position="287"/>
    </location>
</feature>
<feature type="region of interest" description="Disordered" evidence="1">
    <location>
        <begin position="1"/>
        <end position="42"/>
    </location>
</feature>
<feature type="region of interest" description="Mn 1" evidence="8">
    <location>
        <begin position="128"/>
        <end position="160"/>
    </location>
</feature>
<feature type="region of interest" description="Disordered" evidence="1">
    <location>
        <begin position="179"/>
        <end position="287"/>
    </location>
</feature>
<feature type="region of interest" description="Mn 2" evidence="8">
    <location>
        <begin position="213"/>
        <end position="246"/>
    </location>
</feature>
<feature type="compositionally biased region" description="Basic and acidic residues" evidence="1">
    <location>
        <begin position="1"/>
        <end position="15"/>
    </location>
</feature>
<feature type="compositionally biased region" description="Basic and acidic residues" evidence="1">
    <location>
        <begin position="25"/>
        <end position="34"/>
    </location>
</feature>
<feature type="compositionally biased region" description="Basic and acidic residues" evidence="1">
    <location>
        <begin position="203"/>
        <end position="212"/>
    </location>
</feature>
<feature type="compositionally biased region" description="Basic and acidic residues" evidence="1">
    <location>
        <begin position="232"/>
        <end position="245"/>
    </location>
</feature>
<feature type="splice variant" id="VSP_033353" description="In isoform 2." evidence="5 6">
    <location>
        <begin position="1"/>
        <end position="121"/>
    </location>
</feature>
<feature type="sequence variant" id="VAR_061571" description="In dbSNP:rs55714450.">
    <original>H</original>
    <variation>N</variation>
    <location>
        <position position="29"/>
    </location>
</feature>
<feature type="sequence variant" id="VAR_042973" description="In dbSNP:rs2280718." evidence="2 3 4">
    <original>P</original>
    <variation>L</variation>
    <location>
        <position position="254"/>
    </location>
</feature>
<feature type="sequence variant" id="VAR_042974" description="In dbSNP:rs13184." evidence="2 4">
    <original>R</original>
    <variation>T</variation>
    <location>
        <position position="275"/>
    </location>
</feature>
<comment type="subcellular location">
    <subcellularLocation>
        <location evidence="7">Cell projection</location>
        <location evidence="7">Cilium</location>
    </subcellularLocation>
</comment>
<comment type="alternative products">
    <event type="alternative splicing"/>
    <isoform>
        <id>Q8N5S3-1</id>
        <name>1</name>
        <sequence type="displayed"/>
    </isoform>
    <isoform>
        <id>Q8N5S3-2</id>
        <name>2</name>
        <sequence type="described" ref="VSP_033353"/>
    </isoform>
</comment>
<comment type="sequence caution" evidence="7">
    <conflict type="erroneous initiation">
        <sequence resource="EMBL-CDS" id="AAH31669"/>
    </conflict>
</comment>
<reference key="1">
    <citation type="journal article" date="2004" name="Nat. Genet.">
        <title>Complete sequencing and characterization of 21,243 full-length human cDNAs.</title>
        <authorList>
            <person name="Ota T."/>
            <person name="Suzuki Y."/>
            <person name="Nishikawa T."/>
            <person name="Otsuki T."/>
            <person name="Sugiyama T."/>
            <person name="Irie R."/>
            <person name="Wakamatsu A."/>
            <person name="Hayashi K."/>
            <person name="Sato H."/>
            <person name="Nagai K."/>
            <person name="Kimura K."/>
            <person name="Makita H."/>
            <person name="Sekine M."/>
            <person name="Obayashi M."/>
            <person name="Nishi T."/>
            <person name="Shibahara T."/>
            <person name="Tanaka T."/>
            <person name="Ishii S."/>
            <person name="Yamamoto J."/>
            <person name="Saito K."/>
            <person name="Kawai Y."/>
            <person name="Isono Y."/>
            <person name="Nakamura Y."/>
            <person name="Nagahari K."/>
            <person name="Murakami K."/>
            <person name="Yasuda T."/>
            <person name="Iwayanagi T."/>
            <person name="Wagatsuma M."/>
            <person name="Shiratori A."/>
            <person name="Sudo H."/>
            <person name="Hosoiri T."/>
            <person name="Kaku Y."/>
            <person name="Kodaira H."/>
            <person name="Kondo H."/>
            <person name="Sugawara M."/>
            <person name="Takahashi M."/>
            <person name="Kanda K."/>
            <person name="Yokoi T."/>
            <person name="Furuya T."/>
            <person name="Kikkawa E."/>
            <person name="Omura Y."/>
            <person name="Abe K."/>
            <person name="Kamihara K."/>
            <person name="Katsuta N."/>
            <person name="Sato K."/>
            <person name="Tanikawa M."/>
            <person name="Yamazaki M."/>
            <person name="Ninomiya K."/>
            <person name="Ishibashi T."/>
            <person name="Yamashita H."/>
            <person name="Murakawa K."/>
            <person name="Fujimori K."/>
            <person name="Tanai H."/>
            <person name="Kimata M."/>
            <person name="Watanabe M."/>
            <person name="Hiraoka S."/>
            <person name="Chiba Y."/>
            <person name="Ishida S."/>
            <person name="Ono Y."/>
            <person name="Takiguchi S."/>
            <person name="Watanabe S."/>
            <person name="Yosida M."/>
            <person name="Hotuta T."/>
            <person name="Kusano J."/>
            <person name="Kanehori K."/>
            <person name="Takahashi-Fujii A."/>
            <person name="Hara H."/>
            <person name="Tanase T.-O."/>
            <person name="Nomura Y."/>
            <person name="Togiya S."/>
            <person name="Komai F."/>
            <person name="Hara R."/>
            <person name="Takeuchi K."/>
            <person name="Arita M."/>
            <person name="Imose N."/>
            <person name="Musashino K."/>
            <person name="Yuuki H."/>
            <person name="Oshima A."/>
            <person name="Sasaki N."/>
            <person name="Aotsuka S."/>
            <person name="Yoshikawa Y."/>
            <person name="Matsunawa H."/>
            <person name="Ichihara T."/>
            <person name="Shiohata N."/>
            <person name="Sano S."/>
            <person name="Moriya S."/>
            <person name="Momiyama H."/>
            <person name="Satoh N."/>
            <person name="Takami S."/>
            <person name="Terashima Y."/>
            <person name="Suzuki O."/>
            <person name="Nakagawa S."/>
            <person name="Senoh A."/>
            <person name="Mizoguchi H."/>
            <person name="Goto Y."/>
            <person name="Shimizu F."/>
            <person name="Wakebe H."/>
            <person name="Hishigaki H."/>
            <person name="Watanabe T."/>
            <person name="Sugiyama A."/>
            <person name="Takemoto M."/>
            <person name="Kawakami B."/>
            <person name="Yamazaki M."/>
            <person name="Watanabe K."/>
            <person name="Kumagai A."/>
            <person name="Itakura S."/>
            <person name="Fukuzumi Y."/>
            <person name="Fujimori Y."/>
            <person name="Komiyama M."/>
            <person name="Tashiro H."/>
            <person name="Tanigami A."/>
            <person name="Fujiwara T."/>
            <person name="Ono T."/>
            <person name="Yamada K."/>
            <person name="Fujii Y."/>
            <person name="Ozaki K."/>
            <person name="Hirao M."/>
            <person name="Ohmori Y."/>
            <person name="Kawabata A."/>
            <person name="Hikiji T."/>
            <person name="Kobatake N."/>
            <person name="Inagaki H."/>
            <person name="Ikema Y."/>
            <person name="Okamoto S."/>
            <person name="Okitani R."/>
            <person name="Kawakami T."/>
            <person name="Noguchi S."/>
            <person name="Itoh T."/>
            <person name="Shigeta K."/>
            <person name="Senba T."/>
            <person name="Matsumura K."/>
            <person name="Nakajima Y."/>
            <person name="Mizuno T."/>
            <person name="Morinaga M."/>
            <person name="Sasaki M."/>
            <person name="Togashi T."/>
            <person name="Oyama M."/>
            <person name="Hata H."/>
            <person name="Watanabe M."/>
            <person name="Komatsu T."/>
            <person name="Mizushima-Sugano J."/>
            <person name="Satoh T."/>
            <person name="Shirai Y."/>
            <person name="Takahashi Y."/>
            <person name="Nakagawa K."/>
            <person name="Okumura K."/>
            <person name="Nagase T."/>
            <person name="Nomura N."/>
            <person name="Kikuchi H."/>
            <person name="Masuho Y."/>
            <person name="Yamashita R."/>
            <person name="Nakai K."/>
            <person name="Yada T."/>
            <person name="Nakamura Y."/>
            <person name="Ohara O."/>
            <person name="Isogai T."/>
            <person name="Sugano S."/>
        </authorList>
    </citation>
    <scope>NUCLEOTIDE SEQUENCE [LARGE SCALE MRNA] (ISOFORM 2)</scope>
    <scope>VARIANTS LEU-254 AND THR-275</scope>
    <source>
        <tissue>Testis</tissue>
    </source>
</reference>
<reference key="2">
    <citation type="journal article" date="2005" name="Nature">
        <title>Generation and annotation of the DNA sequences of human chromosomes 2 and 4.</title>
        <authorList>
            <person name="Hillier L.W."/>
            <person name="Graves T.A."/>
            <person name="Fulton R.S."/>
            <person name="Fulton L.A."/>
            <person name="Pepin K.H."/>
            <person name="Minx P."/>
            <person name="Wagner-McPherson C."/>
            <person name="Layman D."/>
            <person name="Wylie K."/>
            <person name="Sekhon M."/>
            <person name="Becker M.C."/>
            <person name="Fewell G.A."/>
            <person name="Delehaunty K.D."/>
            <person name="Miner T.L."/>
            <person name="Nash W.E."/>
            <person name="Kremitzki C."/>
            <person name="Oddy L."/>
            <person name="Du H."/>
            <person name="Sun H."/>
            <person name="Bradshaw-Cordum H."/>
            <person name="Ali J."/>
            <person name="Carter J."/>
            <person name="Cordes M."/>
            <person name="Harris A."/>
            <person name="Isak A."/>
            <person name="van Brunt A."/>
            <person name="Nguyen C."/>
            <person name="Du F."/>
            <person name="Courtney L."/>
            <person name="Kalicki J."/>
            <person name="Ozersky P."/>
            <person name="Abbott S."/>
            <person name="Armstrong J."/>
            <person name="Belter E.A."/>
            <person name="Caruso L."/>
            <person name="Cedroni M."/>
            <person name="Cotton M."/>
            <person name="Davidson T."/>
            <person name="Desai A."/>
            <person name="Elliott G."/>
            <person name="Erb T."/>
            <person name="Fronick C."/>
            <person name="Gaige T."/>
            <person name="Haakenson W."/>
            <person name="Haglund K."/>
            <person name="Holmes A."/>
            <person name="Harkins R."/>
            <person name="Kim K."/>
            <person name="Kruchowski S.S."/>
            <person name="Strong C.M."/>
            <person name="Grewal N."/>
            <person name="Goyea E."/>
            <person name="Hou S."/>
            <person name="Levy A."/>
            <person name="Martinka S."/>
            <person name="Mead K."/>
            <person name="McLellan M.D."/>
            <person name="Meyer R."/>
            <person name="Randall-Maher J."/>
            <person name="Tomlinson C."/>
            <person name="Dauphin-Kohlberg S."/>
            <person name="Kozlowicz-Reilly A."/>
            <person name="Shah N."/>
            <person name="Swearengen-Shahid S."/>
            <person name="Snider J."/>
            <person name="Strong J.T."/>
            <person name="Thompson J."/>
            <person name="Yoakum M."/>
            <person name="Leonard S."/>
            <person name="Pearman C."/>
            <person name="Trani L."/>
            <person name="Radionenko M."/>
            <person name="Waligorski J.E."/>
            <person name="Wang C."/>
            <person name="Rock S.M."/>
            <person name="Tin-Wollam A.-M."/>
            <person name="Maupin R."/>
            <person name="Latreille P."/>
            <person name="Wendl M.C."/>
            <person name="Yang S.-P."/>
            <person name="Pohl C."/>
            <person name="Wallis J.W."/>
            <person name="Spieth J."/>
            <person name="Bieri T.A."/>
            <person name="Berkowicz N."/>
            <person name="Nelson J.O."/>
            <person name="Osborne J."/>
            <person name="Ding L."/>
            <person name="Meyer R."/>
            <person name="Sabo A."/>
            <person name="Shotland Y."/>
            <person name="Sinha P."/>
            <person name="Wohldmann P.E."/>
            <person name="Cook L.L."/>
            <person name="Hickenbotham M.T."/>
            <person name="Eldred J."/>
            <person name="Williams D."/>
            <person name="Jones T.A."/>
            <person name="She X."/>
            <person name="Ciccarelli F.D."/>
            <person name="Izaurralde E."/>
            <person name="Taylor J."/>
            <person name="Schmutz J."/>
            <person name="Myers R.M."/>
            <person name="Cox D.R."/>
            <person name="Huang X."/>
            <person name="McPherson J.D."/>
            <person name="Mardis E.R."/>
            <person name="Clifton S.W."/>
            <person name="Warren W.C."/>
            <person name="Chinwalla A.T."/>
            <person name="Eddy S.R."/>
            <person name="Marra M.A."/>
            <person name="Ovcharenko I."/>
            <person name="Furey T.S."/>
            <person name="Miller W."/>
            <person name="Eichler E.E."/>
            <person name="Bork P."/>
            <person name="Suyama M."/>
            <person name="Torrents D."/>
            <person name="Waterston R.H."/>
            <person name="Wilson R.K."/>
        </authorList>
    </citation>
    <scope>NUCLEOTIDE SEQUENCE [LARGE SCALE GENOMIC DNA]</scope>
</reference>
<reference key="3">
    <citation type="submission" date="2005-09" db="EMBL/GenBank/DDBJ databases">
        <authorList>
            <person name="Mural R.J."/>
            <person name="Istrail S."/>
            <person name="Sutton G.G."/>
            <person name="Florea L."/>
            <person name="Halpern A.L."/>
            <person name="Mobarry C.M."/>
            <person name="Lippert R."/>
            <person name="Walenz B."/>
            <person name="Shatkay H."/>
            <person name="Dew I."/>
            <person name="Miller J.R."/>
            <person name="Flanigan M.J."/>
            <person name="Edwards N.J."/>
            <person name="Bolanos R."/>
            <person name="Fasulo D."/>
            <person name="Halldorsson B.V."/>
            <person name="Hannenhalli S."/>
            <person name="Turner R."/>
            <person name="Yooseph S."/>
            <person name="Lu F."/>
            <person name="Nusskern D.R."/>
            <person name="Shue B.C."/>
            <person name="Zheng X.H."/>
            <person name="Zhong F."/>
            <person name="Delcher A.L."/>
            <person name="Huson D.H."/>
            <person name="Kravitz S.A."/>
            <person name="Mouchard L."/>
            <person name="Reinert K."/>
            <person name="Remington K.A."/>
            <person name="Clark A.G."/>
            <person name="Waterman M.S."/>
            <person name="Eichler E.E."/>
            <person name="Adams M.D."/>
            <person name="Hunkapiller M.W."/>
            <person name="Myers E.W."/>
            <person name="Venter J.C."/>
        </authorList>
    </citation>
    <scope>NUCLEOTIDE SEQUENCE [LARGE SCALE GENOMIC DNA]</scope>
    <scope>VARIANTS LEU-254 AND THR-275</scope>
</reference>
<reference key="4">
    <citation type="journal article" date="2004" name="Genome Res.">
        <title>The status, quality, and expansion of the NIH full-length cDNA project: the Mammalian Gene Collection (MGC).</title>
        <authorList>
            <consortium name="The MGC Project Team"/>
        </authorList>
    </citation>
    <scope>NUCLEOTIDE SEQUENCE [LARGE SCALE MRNA] (ISOFORMS 1 AND 2)</scope>
    <scope>VARIANT LEU-254</scope>
    <source>
        <tissue>Brain</tissue>
    </source>
</reference>
<reference key="5">
    <citation type="journal article" date="2024" name="Nat. Commun.">
        <title>Uncovering structural themes across cilia microtubule inner proteins with implications for human cilia function.</title>
        <authorList>
            <person name="Andersen J.S."/>
            <person name="Vijayakumaran A."/>
            <person name="Godbehere C."/>
            <person name="Lorentzen E."/>
            <person name="Mennella V."/>
            <person name="Schou K.B."/>
        </authorList>
    </citation>
    <scope>IDENTIFICATION OF MN REGIONS</scope>
</reference>
<accession>Q8N5S3</accession>
<accession>A0AV79</accession>
<accession>A0AV81</accession>
<accession>Q8N7V4</accession>
<evidence type="ECO:0000256" key="1">
    <source>
        <dbReference type="SAM" id="MobiDB-lite"/>
    </source>
</evidence>
<evidence type="ECO:0000269" key="2">
    <source>
    </source>
</evidence>
<evidence type="ECO:0000269" key="3">
    <source>
    </source>
</evidence>
<evidence type="ECO:0000269" key="4">
    <source ref="3"/>
</evidence>
<evidence type="ECO:0000303" key="5">
    <source>
    </source>
</evidence>
<evidence type="ECO:0000303" key="6">
    <source>
    </source>
</evidence>
<evidence type="ECO:0000305" key="7"/>
<evidence type="ECO:0000305" key="8">
    <source>
    </source>
</evidence>
<evidence type="ECO:0000312" key="9">
    <source>
        <dbReference type="HGNC" id="HGNC:26861"/>
    </source>
</evidence>
<keyword id="KW-0025">Alternative splicing</keyword>
<keyword id="KW-0966">Cell projection</keyword>
<keyword id="KW-1267">Proteomics identification</keyword>
<keyword id="KW-1185">Reference proteome</keyword>
<proteinExistence type="evidence at protein level"/>
<sequence length="287" mass="32142">MEEKEDKHQQHKIEDAAITYVSENEEIKHEEKPGKSIHHSKSHVGRGRIYYAKFINTNARTYNEPFPYIDPKKGPEIQGDWWSHGKALEPVFLPPYDSKSTQRSDFQKPSCPLVLPVKHSKMQKPSCGIVPLASPGTSAELQNNFIEYISFIHQYDARKTPNEPLQGKRHGAFVQREIKPGSRPTVPKGAEVLLNTPGSRSSEQSKKTEKGNSAESRMISPGLCQQNSQELLEPKTHLSETDVRQAAKACPSTPESREKTSGATQTTVGDALFTRHKPLNPPIKKSE</sequence>
<organism>
    <name type="scientific">Homo sapiens</name>
    <name type="common">Human</name>
    <dbReference type="NCBI Taxonomy" id="9606"/>
    <lineage>
        <taxon>Eukaryota</taxon>
        <taxon>Metazoa</taxon>
        <taxon>Chordata</taxon>
        <taxon>Craniata</taxon>
        <taxon>Vertebrata</taxon>
        <taxon>Euteleostomi</taxon>
        <taxon>Mammalia</taxon>
        <taxon>Eutheria</taxon>
        <taxon>Euarchontoglires</taxon>
        <taxon>Primates</taxon>
        <taxon>Haplorrhini</taxon>
        <taxon>Catarrhini</taxon>
        <taxon>Hominidae</taxon>
        <taxon>Homo</taxon>
    </lineage>
</organism>
<protein>
    <recommendedName>
        <fullName evidence="9">Ciliary microtubule inner protein 6</fullName>
    </recommendedName>
</protein>